<name>PILA3_THET2</name>
<feature type="propeptide" id="PRO_0000450704" description="Leader sequence" evidence="3 7">
    <location>
        <begin position="1"/>
        <end position="4"/>
    </location>
</feature>
<feature type="chain" id="PRO_0000450705" description="Pilin-like protein PilA3" evidence="3">
    <location>
        <begin position="5"/>
        <end position="233"/>
    </location>
</feature>
<feature type="transmembrane region" description="Helical" evidence="2">
    <location>
        <begin position="5"/>
        <end position="25"/>
    </location>
</feature>
<feature type="region of interest" description="Disordered" evidence="4">
    <location>
        <begin position="121"/>
        <end position="143"/>
    </location>
</feature>
<feature type="compositionally biased region" description="Polar residues" evidence="4">
    <location>
        <begin position="126"/>
        <end position="137"/>
    </location>
</feature>
<feature type="modified residue" description="N-methylphenylalanine" evidence="3">
    <location>
        <position position="5"/>
    </location>
</feature>
<gene>
    <name type="primary">pilA3</name>
    <name type="ordered locus">TT_C0856</name>
</gene>
<proteinExistence type="inferred from homology"/>
<organism>
    <name type="scientific">Thermus thermophilus (strain ATCC BAA-163 / DSM 7039 / HB27)</name>
    <dbReference type="NCBI Taxonomy" id="262724"/>
    <lineage>
        <taxon>Bacteria</taxon>
        <taxon>Thermotogati</taxon>
        <taxon>Deinococcota</taxon>
        <taxon>Deinococci</taxon>
        <taxon>Thermales</taxon>
        <taxon>Thermaceae</taxon>
        <taxon>Thermus</taxon>
    </lineage>
</organism>
<comment type="function">
    <text evidence="5">Plays an essential role in natural DNA transformation but is not required for pilus biogenesis.</text>
</comment>
<comment type="subcellular location">
    <subcellularLocation>
        <location evidence="1">Cell inner membrane</location>
        <topology evidence="2">Single-pass membrane protein</topology>
    </subcellularLocation>
    <subcellularLocation>
        <location evidence="1">Cell outer membrane</location>
        <topology evidence="2">Single-pass membrane protein</topology>
    </subcellularLocation>
    <subcellularLocation>
        <location evidence="1">Periplasm</location>
    </subcellularLocation>
    <text evidence="1">The single N-terminal transmembrane is initially involved in the correct localization to the inner membrane. Once the leader sequence cleaved, this region plays a role in multimerization and protein-protein interactions in the periplasm and the outer membrane.</text>
</comment>
<comment type="disruption phenotype">
    <text evidence="5">Mutants have a wild-type piliation phenotype but are deficient in transformation.</text>
</comment>
<keyword id="KW-0997">Cell inner membrane</keyword>
<keyword id="KW-1003">Cell membrane</keyword>
<keyword id="KW-0998">Cell outer membrane</keyword>
<keyword id="KW-0472">Membrane</keyword>
<keyword id="KW-0488">Methylation</keyword>
<keyword id="KW-0574">Periplasm</keyword>
<keyword id="KW-0812">Transmembrane</keyword>
<keyword id="KW-1133">Transmembrane helix</keyword>
<protein>
    <recommendedName>
        <fullName evidence="6">Pilin-like protein PilA3</fullName>
    </recommendedName>
</protein>
<dbReference type="EMBL" id="AE017221">
    <property type="protein sequence ID" value="AAS81200.1"/>
    <property type="molecule type" value="Genomic_DNA"/>
</dbReference>
<dbReference type="RefSeq" id="WP_011173285.1">
    <property type="nucleotide sequence ID" value="NC_005835.1"/>
</dbReference>
<dbReference type="SMR" id="Q72JC2"/>
<dbReference type="KEGG" id="tth:TT_C0856"/>
<dbReference type="eggNOG" id="COG4966">
    <property type="taxonomic scope" value="Bacteria"/>
</dbReference>
<dbReference type="HOGENOM" id="CLU_1204321_0_0_0"/>
<dbReference type="OrthoDB" id="31478at2"/>
<dbReference type="Proteomes" id="UP000000592">
    <property type="component" value="Chromosome"/>
</dbReference>
<dbReference type="GO" id="GO:0009279">
    <property type="term" value="C:cell outer membrane"/>
    <property type="evidence" value="ECO:0007669"/>
    <property type="project" value="UniProtKB-SubCell"/>
</dbReference>
<dbReference type="GO" id="GO:0042597">
    <property type="term" value="C:periplasmic space"/>
    <property type="evidence" value="ECO:0007669"/>
    <property type="project" value="UniProtKB-SubCell"/>
</dbReference>
<dbReference type="GO" id="GO:0005886">
    <property type="term" value="C:plasma membrane"/>
    <property type="evidence" value="ECO:0007669"/>
    <property type="project" value="UniProtKB-SubCell"/>
</dbReference>
<dbReference type="InterPro" id="IPR012902">
    <property type="entry name" value="N_methyl_site"/>
</dbReference>
<dbReference type="InterPro" id="IPR045584">
    <property type="entry name" value="Pilin-like"/>
</dbReference>
<dbReference type="NCBIfam" id="TIGR02532">
    <property type="entry name" value="IV_pilin_GFxxxE"/>
    <property type="match status" value="1"/>
</dbReference>
<dbReference type="Pfam" id="PF07963">
    <property type="entry name" value="N_methyl"/>
    <property type="match status" value="1"/>
</dbReference>
<dbReference type="SUPFAM" id="SSF54523">
    <property type="entry name" value="Pili subunits"/>
    <property type="match status" value="1"/>
</dbReference>
<dbReference type="PROSITE" id="PS00409">
    <property type="entry name" value="PROKAR_NTER_METHYL"/>
    <property type="match status" value="1"/>
</dbReference>
<sequence>MKRGFTLVEVLVAMAILVVVLAVGVRYFASTSELARNTQARSELQDRVRMVMQVVTADLQMAGARYWNSGNQNQAFSLPLPPLSGSNMGPKDTLTLYYVTSLRDLASACRRVDYGFEGDTLRRSDVNATPSSGSDCTTPPPNSQPLAEGMLALDIQYQCSDGSRKDTPDCGTDAYPRSAKVTVAGYSLTSVTNPGPASLTTVTGKTLACPQGRACYALTQEVLMPNLKPLPTP</sequence>
<evidence type="ECO:0000250" key="1">
    <source>
        <dbReference type="UniProtKB" id="Q72JC0"/>
    </source>
</evidence>
<evidence type="ECO:0000255" key="2"/>
<evidence type="ECO:0000255" key="3">
    <source>
        <dbReference type="PROSITE-ProRule" id="PRU01070"/>
    </source>
</evidence>
<evidence type="ECO:0000256" key="4">
    <source>
        <dbReference type="SAM" id="MobiDB-lite"/>
    </source>
</evidence>
<evidence type="ECO:0000269" key="5">
    <source>
    </source>
</evidence>
<evidence type="ECO:0000303" key="6">
    <source>
    </source>
</evidence>
<evidence type="ECO:0000305" key="7"/>
<accession>Q72JC2</accession>
<reference key="1">
    <citation type="journal article" date="2004" name="Nat. Biotechnol.">
        <title>The genome sequence of the extreme thermophile Thermus thermophilus.</title>
        <authorList>
            <person name="Henne A."/>
            <person name="Brueggemann H."/>
            <person name="Raasch C."/>
            <person name="Wiezer A."/>
            <person name="Hartsch T."/>
            <person name="Liesegang H."/>
            <person name="Johann A."/>
            <person name="Lienard T."/>
            <person name="Gohl O."/>
            <person name="Martinez-Arias R."/>
            <person name="Jacobi C."/>
            <person name="Starkuviene V."/>
            <person name="Schlenczeck S."/>
            <person name="Dencker S."/>
            <person name="Huber R."/>
            <person name="Klenk H.-P."/>
            <person name="Kramer W."/>
            <person name="Merkl R."/>
            <person name="Gottschalk G."/>
            <person name="Fritz H.-J."/>
        </authorList>
    </citation>
    <scope>NUCLEOTIDE SEQUENCE [LARGE SCALE GENOMIC DNA]</scope>
    <source>
        <strain>ATCC BAA-163 / DSM 7039 / HB27</strain>
    </source>
</reference>
<reference key="2">
    <citation type="journal article" date="2003" name="Appl. Environ. Microbiol.">
        <title>Pilin-like proteins in the extremely thermophilic bacterium Thermus thermophilus HB27: implication in competence for natural transformation and links to type IV pilus biogenesis.</title>
        <authorList>
            <person name="Friedrich A."/>
            <person name="Rumszauer J."/>
            <person name="Henne A."/>
            <person name="Averhoff B."/>
        </authorList>
    </citation>
    <scope>FUNCTION</scope>
    <scope>DISRUPTION PHENOTYPE</scope>
</reference>